<evidence type="ECO:0000255" key="1">
    <source>
        <dbReference type="HAMAP-Rule" id="MF_00050"/>
    </source>
</evidence>
<reference key="1">
    <citation type="journal article" date="2007" name="PLoS Genet.">
        <title>The complete genome sequence of Yersinia pseudotuberculosis IP31758, the causative agent of Far East scarlet-like fever.</title>
        <authorList>
            <person name="Eppinger M."/>
            <person name="Rosovitz M.J."/>
            <person name="Fricke W.F."/>
            <person name="Rasko D.A."/>
            <person name="Kokorina G."/>
            <person name="Fayolle C."/>
            <person name="Lindler L.E."/>
            <person name="Carniel E."/>
            <person name="Ravel J."/>
        </authorList>
    </citation>
    <scope>NUCLEOTIDE SEQUENCE [LARGE SCALE GENOMIC DNA]</scope>
    <source>
        <strain>IP 31758</strain>
    </source>
</reference>
<sequence length="285" mass="30721">MVAITAALVKELRERTAAGMMECKKALVEANGDIELAIDNMRKSGQAKAAKKAGRIAAEGIILAKVSADGKYGVILELNCETDFVAKDAGFKAFGEEVINAALAEKIADIDVLKAKFEEQRANLVAKIGENINIRRVAVLEGDILGTYLHGARIGVMVAATGADEELVKHIAMHIAASKPEYVKPDDVPAEVVAREHQIQLDIAIESGKPREIAEKMVEGRMRKFTGEVSLTGQNFVMDPSKTVGDLLKENNADVVNFIRFEVGEGIEKVETDFAAEVAAMSKQS</sequence>
<protein>
    <recommendedName>
        <fullName evidence="1">Elongation factor Ts</fullName>
        <shortName evidence="1">EF-Ts</shortName>
    </recommendedName>
</protein>
<name>EFTS_YERP3</name>
<comment type="function">
    <text evidence="1">Associates with the EF-Tu.GDP complex and induces the exchange of GDP to GTP. It remains bound to the aminoacyl-tRNA.EF-Tu.GTP complex up to the GTP hydrolysis stage on the ribosome.</text>
</comment>
<comment type="subcellular location">
    <subcellularLocation>
        <location evidence="1">Cytoplasm</location>
    </subcellularLocation>
</comment>
<comment type="similarity">
    <text evidence="1">Belongs to the EF-Ts family.</text>
</comment>
<organism>
    <name type="scientific">Yersinia pseudotuberculosis serotype O:1b (strain IP 31758)</name>
    <dbReference type="NCBI Taxonomy" id="349747"/>
    <lineage>
        <taxon>Bacteria</taxon>
        <taxon>Pseudomonadati</taxon>
        <taxon>Pseudomonadota</taxon>
        <taxon>Gammaproteobacteria</taxon>
        <taxon>Enterobacterales</taxon>
        <taxon>Yersiniaceae</taxon>
        <taxon>Yersinia</taxon>
    </lineage>
</organism>
<keyword id="KW-0963">Cytoplasm</keyword>
<keyword id="KW-0251">Elongation factor</keyword>
<keyword id="KW-0648">Protein biosynthesis</keyword>
<proteinExistence type="inferred from homology"/>
<gene>
    <name evidence="1" type="primary">tsf</name>
    <name type="ordered locus">YpsIP31758_1014</name>
</gene>
<accession>A7FFH0</accession>
<feature type="chain" id="PRO_1000057361" description="Elongation factor Ts">
    <location>
        <begin position="1"/>
        <end position="285"/>
    </location>
</feature>
<feature type="region of interest" description="Involved in Mg(2+) ion dislocation from EF-Tu" evidence="1">
    <location>
        <begin position="82"/>
        <end position="85"/>
    </location>
</feature>
<dbReference type="EMBL" id="CP000720">
    <property type="protein sequence ID" value="ABS47818.1"/>
    <property type="molecule type" value="Genomic_DNA"/>
</dbReference>
<dbReference type="RefSeq" id="WP_002212132.1">
    <property type="nucleotide sequence ID" value="NC_009708.1"/>
</dbReference>
<dbReference type="SMR" id="A7FFH0"/>
<dbReference type="GeneID" id="96662369"/>
<dbReference type="KEGG" id="ypi:YpsIP31758_1014"/>
<dbReference type="HOGENOM" id="CLU_047155_0_2_6"/>
<dbReference type="Proteomes" id="UP000002412">
    <property type="component" value="Chromosome"/>
</dbReference>
<dbReference type="GO" id="GO:0005737">
    <property type="term" value="C:cytoplasm"/>
    <property type="evidence" value="ECO:0007669"/>
    <property type="project" value="UniProtKB-SubCell"/>
</dbReference>
<dbReference type="GO" id="GO:0003746">
    <property type="term" value="F:translation elongation factor activity"/>
    <property type="evidence" value="ECO:0007669"/>
    <property type="project" value="UniProtKB-UniRule"/>
</dbReference>
<dbReference type="CDD" id="cd14275">
    <property type="entry name" value="UBA_EF-Ts"/>
    <property type="match status" value="1"/>
</dbReference>
<dbReference type="FunFam" id="1.10.286.20:FF:000001">
    <property type="entry name" value="Elongation factor Ts"/>
    <property type="match status" value="1"/>
</dbReference>
<dbReference type="FunFam" id="1.10.8.10:FF:000001">
    <property type="entry name" value="Elongation factor Ts"/>
    <property type="match status" value="1"/>
</dbReference>
<dbReference type="FunFam" id="3.30.479.20:FF:000001">
    <property type="entry name" value="Elongation factor Ts"/>
    <property type="match status" value="1"/>
</dbReference>
<dbReference type="Gene3D" id="1.10.286.20">
    <property type="match status" value="1"/>
</dbReference>
<dbReference type="Gene3D" id="1.10.8.10">
    <property type="entry name" value="DNA helicase RuvA subunit, C-terminal domain"/>
    <property type="match status" value="1"/>
</dbReference>
<dbReference type="Gene3D" id="3.30.479.20">
    <property type="entry name" value="Elongation factor Ts, dimerisation domain"/>
    <property type="match status" value="2"/>
</dbReference>
<dbReference type="HAMAP" id="MF_00050">
    <property type="entry name" value="EF_Ts"/>
    <property type="match status" value="1"/>
</dbReference>
<dbReference type="InterPro" id="IPR036402">
    <property type="entry name" value="EF-Ts_dimer_sf"/>
</dbReference>
<dbReference type="InterPro" id="IPR001816">
    <property type="entry name" value="Transl_elong_EFTs/EF1B"/>
</dbReference>
<dbReference type="InterPro" id="IPR014039">
    <property type="entry name" value="Transl_elong_EFTs/EF1B_dimer"/>
</dbReference>
<dbReference type="InterPro" id="IPR018101">
    <property type="entry name" value="Transl_elong_Ts_CS"/>
</dbReference>
<dbReference type="InterPro" id="IPR009060">
    <property type="entry name" value="UBA-like_sf"/>
</dbReference>
<dbReference type="NCBIfam" id="TIGR00116">
    <property type="entry name" value="tsf"/>
    <property type="match status" value="1"/>
</dbReference>
<dbReference type="PANTHER" id="PTHR11741">
    <property type="entry name" value="ELONGATION FACTOR TS"/>
    <property type="match status" value="1"/>
</dbReference>
<dbReference type="PANTHER" id="PTHR11741:SF0">
    <property type="entry name" value="ELONGATION FACTOR TS, MITOCHONDRIAL"/>
    <property type="match status" value="1"/>
</dbReference>
<dbReference type="Pfam" id="PF00889">
    <property type="entry name" value="EF_TS"/>
    <property type="match status" value="1"/>
</dbReference>
<dbReference type="SUPFAM" id="SSF54713">
    <property type="entry name" value="Elongation factor Ts (EF-Ts), dimerisation domain"/>
    <property type="match status" value="2"/>
</dbReference>
<dbReference type="SUPFAM" id="SSF46934">
    <property type="entry name" value="UBA-like"/>
    <property type="match status" value="1"/>
</dbReference>
<dbReference type="PROSITE" id="PS01127">
    <property type="entry name" value="EF_TS_2"/>
    <property type="match status" value="1"/>
</dbReference>